<evidence type="ECO:0000250" key="1"/>
<evidence type="ECO:0000255" key="2">
    <source>
        <dbReference type="PROSITE-ProRule" id="PRU00192"/>
    </source>
</evidence>
<evidence type="ECO:0000255" key="3">
    <source>
        <dbReference type="PROSITE-ProRule" id="PRU00213"/>
    </source>
</evidence>
<evidence type="ECO:0000255" key="4">
    <source>
        <dbReference type="PROSITE-ProRule" id="PRU00218"/>
    </source>
</evidence>
<evidence type="ECO:0000256" key="5">
    <source>
        <dbReference type="SAM" id="MobiDB-lite"/>
    </source>
</evidence>
<evidence type="ECO:0000305" key="6"/>
<name>HSE1_CHAGB</name>
<proteinExistence type="inferred from homology"/>
<sequence length="713" mass="75997">MFRAAAAGPYDEAINKATDENQTSEDWGAIMEICDRVAGDANGPKESVASLIKRLAHRNANVQLYTLEVANALSQNCGKNMHRELSSRAFTDALLKLANDRNTHTQVKAKILERMKDWSDMFKSDPDLGIMYDAFYRLKQSNPTLQPPSAPQKNSLTDQDRQKEEDELQIALKLSLQEEERKKKPAQAAPAAAPSGAGGPATAGPATQQQPAAPIQPMPSGTTAATVSRVRALYDFAPSEPGELEFKKGDVIAVLESVYKDWWRGSLKGKTGIFPLNYVEKLTDPTPDELQREAQMEAEVFAEIKNVEKLLTLLSASNTAPREEDNEEISKFIKARRDYEALLESSMSHPPGPTYHQYAMRPQIPQGYPPPGQNYGAPPPQQQDAQRFYTPAPAQEPSQYPPSSPPPNNFQRPGPGATPAPFYVAGAEVPSQQNQIPPPTPQQQSQQPQQPQYAQRPSEQRVPSGGKQPAPLQTSSSPPPANQYTPYQAPQSSARPQSTYGSGPQELSTSVYDSPIAPQNANPAAPYPPSAYATPDEDPYTAAAASNSSVPTAPTVPPPSVPAPSAPSPELQQPSYGQPYSAYHAHPPQQTPYRAPGGVGVGASGSYDAATVDGPRPHQQQPLPSGLTMSPPPLHPSGPAYDARQSLPSRVGGPSGPGSGGGAPAMGGAPPQPQYKAYVPPGSSSAPGLPPADDGPTAPTAPAAEGYYRTAAY</sequence>
<dbReference type="EMBL" id="CH408034">
    <property type="protein sequence ID" value="EAQ84885.1"/>
    <property type="molecule type" value="Genomic_DNA"/>
</dbReference>
<dbReference type="RefSeq" id="XP_001226826.1">
    <property type="nucleotide sequence ID" value="XM_001226825.1"/>
</dbReference>
<dbReference type="SMR" id="Q2GT05"/>
<dbReference type="FunCoup" id="Q2GT05">
    <property type="interactions" value="297"/>
</dbReference>
<dbReference type="STRING" id="306901.Q2GT05"/>
<dbReference type="GeneID" id="4395291"/>
<dbReference type="VEuPathDB" id="FungiDB:CHGG_08899"/>
<dbReference type="eggNOG" id="KOG2199">
    <property type="taxonomic scope" value="Eukaryota"/>
</dbReference>
<dbReference type="HOGENOM" id="CLU_010104_1_1_1"/>
<dbReference type="InParanoid" id="Q2GT05"/>
<dbReference type="OMA" id="QVYRDWW"/>
<dbReference type="OrthoDB" id="10255964at2759"/>
<dbReference type="Proteomes" id="UP000001056">
    <property type="component" value="Unassembled WGS sequence"/>
</dbReference>
<dbReference type="GO" id="GO:0010008">
    <property type="term" value="C:endosome membrane"/>
    <property type="evidence" value="ECO:0007669"/>
    <property type="project" value="UniProtKB-SubCell"/>
</dbReference>
<dbReference type="GO" id="GO:0033565">
    <property type="term" value="C:ESCRT-0 complex"/>
    <property type="evidence" value="ECO:0007669"/>
    <property type="project" value="TreeGrafter"/>
</dbReference>
<dbReference type="GO" id="GO:0035091">
    <property type="term" value="F:phosphatidylinositol binding"/>
    <property type="evidence" value="ECO:0007669"/>
    <property type="project" value="InterPro"/>
</dbReference>
<dbReference type="GO" id="GO:0043130">
    <property type="term" value="F:ubiquitin binding"/>
    <property type="evidence" value="ECO:0007669"/>
    <property type="project" value="InterPro"/>
</dbReference>
<dbReference type="GO" id="GO:0043328">
    <property type="term" value="P:protein transport to vacuole involved in ubiquitin-dependent protein catabolic process via the multivesicular body sorting pathway"/>
    <property type="evidence" value="ECO:0007669"/>
    <property type="project" value="TreeGrafter"/>
</dbReference>
<dbReference type="CDD" id="cd11805">
    <property type="entry name" value="SH3_GRB2_like_C"/>
    <property type="match status" value="1"/>
</dbReference>
<dbReference type="CDD" id="cd16978">
    <property type="entry name" value="VHS_HSE1"/>
    <property type="match status" value="1"/>
</dbReference>
<dbReference type="FunFam" id="2.30.30.40:FF:000072">
    <property type="entry name" value="Unconventional Myosin IB"/>
    <property type="match status" value="1"/>
</dbReference>
<dbReference type="Gene3D" id="1.25.40.90">
    <property type="match status" value="1"/>
</dbReference>
<dbReference type="Gene3D" id="2.30.30.40">
    <property type="entry name" value="SH3 Domains"/>
    <property type="match status" value="1"/>
</dbReference>
<dbReference type="InterPro" id="IPR008942">
    <property type="entry name" value="ENTH_VHS"/>
</dbReference>
<dbReference type="InterPro" id="IPR036028">
    <property type="entry name" value="SH3-like_dom_sf"/>
</dbReference>
<dbReference type="InterPro" id="IPR001452">
    <property type="entry name" value="SH3_domain"/>
</dbReference>
<dbReference type="InterPro" id="IPR050670">
    <property type="entry name" value="STAM"/>
</dbReference>
<dbReference type="InterPro" id="IPR003903">
    <property type="entry name" value="UIM_dom"/>
</dbReference>
<dbReference type="InterPro" id="IPR002014">
    <property type="entry name" value="VHS_dom"/>
</dbReference>
<dbReference type="PANTHER" id="PTHR45929">
    <property type="entry name" value="JAK PATHWAY SIGNAL TRANSDUCTION ADAPTOR MOLECULE"/>
    <property type="match status" value="1"/>
</dbReference>
<dbReference type="PANTHER" id="PTHR45929:SF3">
    <property type="entry name" value="JAK PATHWAY SIGNAL TRANSDUCTION ADAPTOR MOLECULE"/>
    <property type="match status" value="1"/>
</dbReference>
<dbReference type="Pfam" id="PF00018">
    <property type="entry name" value="SH3_1"/>
    <property type="match status" value="1"/>
</dbReference>
<dbReference type="Pfam" id="PF00790">
    <property type="entry name" value="VHS"/>
    <property type="match status" value="1"/>
</dbReference>
<dbReference type="PRINTS" id="PR00452">
    <property type="entry name" value="SH3DOMAIN"/>
</dbReference>
<dbReference type="PRINTS" id="PR01887">
    <property type="entry name" value="SPECTRNALPHA"/>
</dbReference>
<dbReference type="SMART" id="SM00326">
    <property type="entry name" value="SH3"/>
    <property type="match status" value="1"/>
</dbReference>
<dbReference type="SMART" id="SM00288">
    <property type="entry name" value="VHS"/>
    <property type="match status" value="1"/>
</dbReference>
<dbReference type="SUPFAM" id="SSF48464">
    <property type="entry name" value="ENTH/VHS domain"/>
    <property type="match status" value="1"/>
</dbReference>
<dbReference type="SUPFAM" id="SSF50044">
    <property type="entry name" value="SH3-domain"/>
    <property type="match status" value="1"/>
</dbReference>
<dbReference type="PROSITE" id="PS50002">
    <property type="entry name" value="SH3"/>
    <property type="match status" value="1"/>
</dbReference>
<dbReference type="PROSITE" id="PS50330">
    <property type="entry name" value="UIM"/>
    <property type="match status" value="1"/>
</dbReference>
<dbReference type="PROSITE" id="PS50179">
    <property type="entry name" value="VHS"/>
    <property type="match status" value="1"/>
</dbReference>
<reference key="1">
    <citation type="journal article" date="2015" name="Genome Announc.">
        <title>Draft genome sequence of the cellulolytic fungus Chaetomium globosum.</title>
        <authorList>
            <person name="Cuomo C.A."/>
            <person name="Untereiner W.A."/>
            <person name="Ma L.-J."/>
            <person name="Grabherr M."/>
            <person name="Birren B.W."/>
        </authorList>
    </citation>
    <scope>NUCLEOTIDE SEQUENCE [LARGE SCALE GENOMIC DNA]</scope>
    <source>
        <strain>ATCC 6205 / CBS 148.51 / DSM 1962 / NBRC 6347 / NRRL 1970</strain>
    </source>
</reference>
<keyword id="KW-0967">Endosome</keyword>
<keyword id="KW-0472">Membrane</keyword>
<keyword id="KW-0653">Protein transport</keyword>
<keyword id="KW-1185">Reference proteome</keyword>
<keyword id="KW-0728">SH3 domain</keyword>
<keyword id="KW-0813">Transport</keyword>
<feature type="chain" id="PRO_0000292492" description="Class E vacuolar protein-sorting machinery protein HSE1">
    <location>
        <begin position="1"/>
        <end position="713"/>
    </location>
</feature>
<feature type="domain" description="VHS" evidence="4">
    <location>
        <begin position="17"/>
        <end position="146"/>
    </location>
</feature>
<feature type="domain" description="UIM" evidence="3">
    <location>
        <begin position="163"/>
        <end position="182"/>
    </location>
</feature>
<feature type="domain" description="SH3" evidence="2">
    <location>
        <begin position="225"/>
        <end position="284"/>
    </location>
</feature>
<feature type="region of interest" description="Disordered" evidence="5">
    <location>
        <begin position="141"/>
        <end position="165"/>
    </location>
</feature>
<feature type="region of interest" description="Disordered" evidence="5">
    <location>
        <begin position="179"/>
        <end position="223"/>
    </location>
</feature>
<feature type="region of interest" description="Disordered" evidence="5">
    <location>
        <begin position="345"/>
        <end position="713"/>
    </location>
</feature>
<feature type="compositionally biased region" description="Low complexity" evidence="5">
    <location>
        <begin position="186"/>
        <end position="195"/>
    </location>
</feature>
<feature type="compositionally biased region" description="Low complexity" evidence="5">
    <location>
        <begin position="202"/>
        <end position="213"/>
    </location>
</feature>
<feature type="compositionally biased region" description="Pro residues" evidence="5">
    <location>
        <begin position="367"/>
        <end position="381"/>
    </location>
</feature>
<feature type="compositionally biased region" description="Pro residues" evidence="5">
    <location>
        <begin position="399"/>
        <end position="408"/>
    </location>
</feature>
<feature type="compositionally biased region" description="Low complexity" evidence="5">
    <location>
        <begin position="442"/>
        <end position="457"/>
    </location>
</feature>
<feature type="compositionally biased region" description="Polar residues" evidence="5">
    <location>
        <begin position="471"/>
        <end position="512"/>
    </location>
</feature>
<feature type="compositionally biased region" description="Low complexity" evidence="5">
    <location>
        <begin position="514"/>
        <end position="524"/>
    </location>
</feature>
<feature type="compositionally biased region" description="Pro residues" evidence="5">
    <location>
        <begin position="554"/>
        <end position="567"/>
    </location>
</feature>
<feature type="compositionally biased region" description="Gly residues" evidence="5">
    <location>
        <begin position="653"/>
        <end position="665"/>
    </location>
</feature>
<feature type="compositionally biased region" description="Low complexity" evidence="5">
    <location>
        <begin position="680"/>
        <end position="704"/>
    </location>
</feature>
<gene>
    <name type="primary">HSE1</name>
    <name type="ORF">CHGG_08899</name>
</gene>
<protein>
    <recommendedName>
        <fullName>Class E vacuolar protein-sorting machinery protein HSE1</fullName>
    </recommendedName>
</protein>
<comment type="function">
    <text evidence="1">Component of the ESCRT-0 complex which is the sorting receptor for ubiquitinated cargo proteins at the multivesicular body (MVB).</text>
</comment>
<comment type="subunit">
    <text evidence="1">Component of the ESCRT-0 complex composed of HSE1 and VPS27.</text>
</comment>
<comment type="subcellular location">
    <subcellularLocation>
        <location evidence="1">Endosome membrane</location>
        <topology evidence="1">Peripheral membrane protein</topology>
        <orientation evidence="1">Cytoplasmic side</orientation>
    </subcellularLocation>
</comment>
<comment type="similarity">
    <text evidence="6">Belongs to the STAM family.</text>
</comment>
<accession>Q2GT05</accession>
<organism>
    <name type="scientific">Chaetomium globosum (strain ATCC 6205 / CBS 148.51 / DSM 1962 / NBRC 6347 / NRRL 1970)</name>
    <name type="common">Soil fungus</name>
    <dbReference type="NCBI Taxonomy" id="306901"/>
    <lineage>
        <taxon>Eukaryota</taxon>
        <taxon>Fungi</taxon>
        <taxon>Dikarya</taxon>
        <taxon>Ascomycota</taxon>
        <taxon>Pezizomycotina</taxon>
        <taxon>Sordariomycetes</taxon>
        <taxon>Sordariomycetidae</taxon>
        <taxon>Sordariales</taxon>
        <taxon>Chaetomiaceae</taxon>
        <taxon>Chaetomium</taxon>
    </lineage>
</organism>